<name>MNME_BORPA</name>
<proteinExistence type="inferred from homology"/>
<evidence type="ECO:0000255" key="1">
    <source>
        <dbReference type="HAMAP-Rule" id="MF_00379"/>
    </source>
</evidence>
<comment type="function">
    <text evidence="1">Exhibits a very high intrinsic GTPase hydrolysis rate. Involved in the addition of a carboxymethylaminomethyl (cmnm) group at the wobble position (U34) of certain tRNAs, forming tRNA-cmnm(5)s(2)U34.</text>
</comment>
<comment type="cofactor">
    <cofactor evidence="1">
        <name>K(+)</name>
        <dbReference type="ChEBI" id="CHEBI:29103"/>
    </cofactor>
    <text evidence="1">Binds 1 potassium ion per subunit.</text>
</comment>
<comment type="subunit">
    <text evidence="1">Homodimer. Heterotetramer of two MnmE and two MnmG subunits.</text>
</comment>
<comment type="subcellular location">
    <subcellularLocation>
        <location evidence="1">Cytoplasm</location>
    </subcellularLocation>
</comment>
<comment type="similarity">
    <text evidence="1">Belongs to the TRAFAC class TrmE-Era-EngA-EngB-Septin-like GTPase superfamily. TrmE GTPase family.</text>
</comment>
<feature type="chain" id="PRO_0000188854" description="tRNA modification GTPase MnmE">
    <location>
        <begin position="1"/>
        <end position="450"/>
    </location>
</feature>
<feature type="domain" description="TrmE-type G">
    <location>
        <begin position="219"/>
        <end position="372"/>
    </location>
</feature>
<feature type="binding site" evidence="1">
    <location>
        <position position="23"/>
    </location>
    <ligand>
        <name>(6S)-5-formyl-5,6,7,8-tetrahydrofolate</name>
        <dbReference type="ChEBI" id="CHEBI:57457"/>
    </ligand>
</feature>
<feature type="binding site" evidence="1">
    <location>
        <position position="80"/>
    </location>
    <ligand>
        <name>(6S)-5-formyl-5,6,7,8-tetrahydrofolate</name>
        <dbReference type="ChEBI" id="CHEBI:57457"/>
    </ligand>
</feature>
<feature type="binding site" evidence="1">
    <location>
        <position position="123"/>
    </location>
    <ligand>
        <name>(6S)-5-formyl-5,6,7,8-tetrahydrofolate</name>
        <dbReference type="ChEBI" id="CHEBI:57457"/>
    </ligand>
</feature>
<feature type="binding site" evidence="1">
    <location>
        <begin position="229"/>
        <end position="234"/>
    </location>
    <ligand>
        <name>GTP</name>
        <dbReference type="ChEBI" id="CHEBI:37565"/>
    </ligand>
</feature>
<feature type="binding site" evidence="1">
    <location>
        <position position="229"/>
    </location>
    <ligand>
        <name>K(+)</name>
        <dbReference type="ChEBI" id="CHEBI:29103"/>
    </ligand>
</feature>
<feature type="binding site" evidence="1">
    <location>
        <position position="233"/>
    </location>
    <ligand>
        <name>Mg(2+)</name>
        <dbReference type="ChEBI" id="CHEBI:18420"/>
    </ligand>
</feature>
<feature type="binding site" evidence="1">
    <location>
        <begin position="248"/>
        <end position="254"/>
    </location>
    <ligand>
        <name>GTP</name>
        <dbReference type="ChEBI" id="CHEBI:37565"/>
    </ligand>
</feature>
<feature type="binding site" evidence="1">
    <location>
        <position position="248"/>
    </location>
    <ligand>
        <name>K(+)</name>
        <dbReference type="ChEBI" id="CHEBI:29103"/>
    </ligand>
</feature>
<feature type="binding site" evidence="1">
    <location>
        <position position="250"/>
    </location>
    <ligand>
        <name>K(+)</name>
        <dbReference type="ChEBI" id="CHEBI:29103"/>
    </ligand>
</feature>
<feature type="binding site" evidence="1">
    <location>
        <position position="253"/>
    </location>
    <ligand>
        <name>K(+)</name>
        <dbReference type="ChEBI" id="CHEBI:29103"/>
    </ligand>
</feature>
<feature type="binding site" evidence="1">
    <location>
        <position position="254"/>
    </location>
    <ligand>
        <name>Mg(2+)</name>
        <dbReference type="ChEBI" id="CHEBI:18420"/>
    </ligand>
</feature>
<feature type="binding site" evidence="1">
    <location>
        <begin position="273"/>
        <end position="276"/>
    </location>
    <ligand>
        <name>GTP</name>
        <dbReference type="ChEBI" id="CHEBI:37565"/>
    </ligand>
</feature>
<feature type="binding site" evidence="1">
    <location>
        <begin position="353"/>
        <end position="355"/>
    </location>
    <ligand>
        <name>GTP</name>
        <dbReference type="ChEBI" id="CHEBI:37565"/>
    </ligand>
</feature>
<feature type="binding site" evidence="1">
    <location>
        <position position="450"/>
    </location>
    <ligand>
        <name>(6S)-5-formyl-5,6,7,8-tetrahydrofolate</name>
        <dbReference type="ChEBI" id="CHEBI:57457"/>
    </ligand>
</feature>
<sequence>MSLYAPIAAIATAPGRGGIGVVRISGPDLAELAQRLFGRPLTPRHAHYLPFRAADGEVIDEGLAIYFRAPHSYTGEDVLELQGHGGPAVLRRILARCLQAGHDLGLRPAEPGEFTRRAFLNERLDLAQAEAVADLIDASSEAAARGAMASLSGEFSQRVNDLSDRIIHLRMLVEATLDFPEEEIDFLEKYQARPTLQALTHDLDTLIAQARQGVILREGLHVVLAGKPNVGKSSLLNALAGDDIAIVTPIAGTTRDKVVQEIHIDGVPLHIVDTAGLRDTDDAVESIGIERTWKEIERADLILHLQDVTQPPDHLDAQIVRRLPARTPVLNVFNKVDLLDAAFQGQPDSLAISARGGIGLDALRQRLLQLAGWNPGAESPWLARERHLHALQQAAQHLEIATEHAREDDRVLDLFAEELRLAHEALTGITGKFTSDDLLGEIFSSFCIGK</sequence>
<gene>
    <name evidence="1" type="primary">mnmE</name>
    <name evidence="1" type="synonym">trmE</name>
    <name type="ordered locus">BPP4417</name>
</gene>
<reference key="1">
    <citation type="journal article" date="2003" name="Nat. Genet.">
        <title>Comparative analysis of the genome sequences of Bordetella pertussis, Bordetella parapertussis and Bordetella bronchiseptica.</title>
        <authorList>
            <person name="Parkhill J."/>
            <person name="Sebaihia M."/>
            <person name="Preston A."/>
            <person name="Murphy L.D."/>
            <person name="Thomson N.R."/>
            <person name="Harris D.E."/>
            <person name="Holden M.T.G."/>
            <person name="Churcher C.M."/>
            <person name="Bentley S.D."/>
            <person name="Mungall K.L."/>
            <person name="Cerdeno-Tarraga A.-M."/>
            <person name="Temple L."/>
            <person name="James K.D."/>
            <person name="Harris B."/>
            <person name="Quail M.A."/>
            <person name="Achtman M."/>
            <person name="Atkin R."/>
            <person name="Baker S."/>
            <person name="Basham D."/>
            <person name="Bason N."/>
            <person name="Cherevach I."/>
            <person name="Chillingworth T."/>
            <person name="Collins M."/>
            <person name="Cronin A."/>
            <person name="Davis P."/>
            <person name="Doggett J."/>
            <person name="Feltwell T."/>
            <person name="Goble A."/>
            <person name="Hamlin N."/>
            <person name="Hauser H."/>
            <person name="Holroyd S."/>
            <person name="Jagels K."/>
            <person name="Leather S."/>
            <person name="Moule S."/>
            <person name="Norberczak H."/>
            <person name="O'Neil S."/>
            <person name="Ormond D."/>
            <person name="Price C."/>
            <person name="Rabbinowitsch E."/>
            <person name="Rutter S."/>
            <person name="Sanders M."/>
            <person name="Saunders D."/>
            <person name="Seeger K."/>
            <person name="Sharp S."/>
            <person name="Simmonds M."/>
            <person name="Skelton J."/>
            <person name="Squares R."/>
            <person name="Squares S."/>
            <person name="Stevens K."/>
            <person name="Unwin L."/>
            <person name="Whitehead S."/>
            <person name="Barrell B.G."/>
            <person name="Maskell D.J."/>
        </authorList>
    </citation>
    <scope>NUCLEOTIDE SEQUENCE [LARGE SCALE GENOMIC DNA]</scope>
    <source>
        <strain>12822 / ATCC BAA-587 / NCTC 13253</strain>
    </source>
</reference>
<dbReference type="EC" id="3.6.-.-" evidence="1"/>
<dbReference type="EMBL" id="BX640436">
    <property type="protein sequence ID" value="CAE39696.1"/>
    <property type="molecule type" value="Genomic_DNA"/>
</dbReference>
<dbReference type="RefSeq" id="WP_010929563.1">
    <property type="nucleotide sequence ID" value="NC_002928.3"/>
</dbReference>
<dbReference type="SMR" id="Q7W2J0"/>
<dbReference type="GeneID" id="93206217"/>
<dbReference type="KEGG" id="bpa:BPP4417"/>
<dbReference type="HOGENOM" id="CLU_019624_4_1_4"/>
<dbReference type="Proteomes" id="UP000001421">
    <property type="component" value="Chromosome"/>
</dbReference>
<dbReference type="GO" id="GO:0005829">
    <property type="term" value="C:cytosol"/>
    <property type="evidence" value="ECO:0007669"/>
    <property type="project" value="TreeGrafter"/>
</dbReference>
<dbReference type="GO" id="GO:0005525">
    <property type="term" value="F:GTP binding"/>
    <property type="evidence" value="ECO:0007669"/>
    <property type="project" value="UniProtKB-UniRule"/>
</dbReference>
<dbReference type="GO" id="GO:0003924">
    <property type="term" value="F:GTPase activity"/>
    <property type="evidence" value="ECO:0007669"/>
    <property type="project" value="UniProtKB-UniRule"/>
</dbReference>
<dbReference type="GO" id="GO:0046872">
    <property type="term" value="F:metal ion binding"/>
    <property type="evidence" value="ECO:0007669"/>
    <property type="project" value="UniProtKB-KW"/>
</dbReference>
<dbReference type="GO" id="GO:0030488">
    <property type="term" value="P:tRNA methylation"/>
    <property type="evidence" value="ECO:0007669"/>
    <property type="project" value="TreeGrafter"/>
</dbReference>
<dbReference type="GO" id="GO:0002098">
    <property type="term" value="P:tRNA wobble uridine modification"/>
    <property type="evidence" value="ECO:0007669"/>
    <property type="project" value="TreeGrafter"/>
</dbReference>
<dbReference type="CDD" id="cd04164">
    <property type="entry name" value="trmE"/>
    <property type="match status" value="1"/>
</dbReference>
<dbReference type="CDD" id="cd14858">
    <property type="entry name" value="TrmE_N"/>
    <property type="match status" value="1"/>
</dbReference>
<dbReference type="FunFam" id="3.40.50.300:FF:001376">
    <property type="entry name" value="tRNA modification GTPase MnmE"/>
    <property type="match status" value="1"/>
</dbReference>
<dbReference type="Gene3D" id="3.40.50.300">
    <property type="entry name" value="P-loop containing nucleotide triphosphate hydrolases"/>
    <property type="match status" value="1"/>
</dbReference>
<dbReference type="Gene3D" id="3.30.1360.120">
    <property type="entry name" value="Probable tRNA modification gtpase trme, domain 1"/>
    <property type="match status" value="1"/>
</dbReference>
<dbReference type="Gene3D" id="1.20.120.430">
    <property type="entry name" value="tRNA modification GTPase MnmE domain 2"/>
    <property type="match status" value="1"/>
</dbReference>
<dbReference type="HAMAP" id="MF_00379">
    <property type="entry name" value="GTPase_MnmE"/>
    <property type="match status" value="1"/>
</dbReference>
<dbReference type="InterPro" id="IPR031168">
    <property type="entry name" value="G_TrmE"/>
</dbReference>
<dbReference type="InterPro" id="IPR006073">
    <property type="entry name" value="GTP-bd"/>
</dbReference>
<dbReference type="InterPro" id="IPR018948">
    <property type="entry name" value="GTP-bd_TrmE_N"/>
</dbReference>
<dbReference type="InterPro" id="IPR004520">
    <property type="entry name" value="GTPase_MnmE"/>
</dbReference>
<dbReference type="InterPro" id="IPR027368">
    <property type="entry name" value="MnmE_dom2"/>
</dbReference>
<dbReference type="InterPro" id="IPR025867">
    <property type="entry name" value="MnmE_helical"/>
</dbReference>
<dbReference type="InterPro" id="IPR027417">
    <property type="entry name" value="P-loop_NTPase"/>
</dbReference>
<dbReference type="InterPro" id="IPR005225">
    <property type="entry name" value="Small_GTP-bd"/>
</dbReference>
<dbReference type="InterPro" id="IPR027266">
    <property type="entry name" value="TrmE/GcvT_dom1"/>
</dbReference>
<dbReference type="NCBIfam" id="TIGR00450">
    <property type="entry name" value="mnmE_trmE_thdF"/>
    <property type="match status" value="1"/>
</dbReference>
<dbReference type="NCBIfam" id="NF003661">
    <property type="entry name" value="PRK05291.1-3"/>
    <property type="match status" value="1"/>
</dbReference>
<dbReference type="NCBIfam" id="TIGR00231">
    <property type="entry name" value="small_GTP"/>
    <property type="match status" value="1"/>
</dbReference>
<dbReference type="PANTHER" id="PTHR42714">
    <property type="entry name" value="TRNA MODIFICATION GTPASE GTPBP3"/>
    <property type="match status" value="1"/>
</dbReference>
<dbReference type="PANTHER" id="PTHR42714:SF2">
    <property type="entry name" value="TRNA MODIFICATION GTPASE GTPBP3, MITOCHONDRIAL"/>
    <property type="match status" value="1"/>
</dbReference>
<dbReference type="Pfam" id="PF01926">
    <property type="entry name" value="MMR_HSR1"/>
    <property type="match status" value="1"/>
</dbReference>
<dbReference type="Pfam" id="PF12631">
    <property type="entry name" value="MnmE_helical"/>
    <property type="match status" value="1"/>
</dbReference>
<dbReference type="Pfam" id="PF10396">
    <property type="entry name" value="TrmE_N"/>
    <property type="match status" value="1"/>
</dbReference>
<dbReference type="PRINTS" id="PR00326">
    <property type="entry name" value="GTP1OBG"/>
</dbReference>
<dbReference type="SUPFAM" id="SSF52540">
    <property type="entry name" value="P-loop containing nucleoside triphosphate hydrolases"/>
    <property type="match status" value="1"/>
</dbReference>
<dbReference type="SUPFAM" id="SSF116878">
    <property type="entry name" value="TrmE connector domain"/>
    <property type="match status" value="1"/>
</dbReference>
<dbReference type="PROSITE" id="PS51709">
    <property type="entry name" value="G_TRME"/>
    <property type="match status" value="1"/>
</dbReference>
<keyword id="KW-0963">Cytoplasm</keyword>
<keyword id="KW-0342">GTP-binding</keyword>
<keyword id="KW-0378">Hydrolase</keyword>
<keyword id="KW-0460">Magnesium</keyword>
<keyword id="KW-0479">Metal-binding</keyword>
<keyword id="KW-0547">Nucleotide-binding</keyword>
<keyword id="KW-0630">Potassium</keyword>
<keyword id="KW-0819">tRNA processing</keyword>
<accession>Q7W2J0</accession>
<organism>
    <name type="scientific">Bordetella parapertussis (strain 12822 / ATCC BAA-587 / NCTC 13253)</name>
    <dbReference type="NCBI Taxonomy" id="257311"/>
    <lineage>
        <taxon>Bacteria</taxon>
        <taxon>Pseudomonadati</taxon>
        <taxon>Pseudomonadota</taxon>
        <taxon>Betaproteobacteria</taxon>
        <taxon>Burkholderiales</taxon>
        <taxon>Alcaligenaceae</taxon>
        <taxon>Bordetella</taxon>
    </lineage>
</organism>
<protein>
    <recommendedName>
        <fullName evidence="1">tRNA modification GTPase MnmE</fullName>
        <ecNumber evidence="1">3.6.-.-</ecNumber>
    </recommendedName>
</protein>